<organism>
    <name type="scientific">Methanocaldococcus jannaschii (strain ATCC 43067 / DSM 2661 / JAL-1 / JCM 10045 / NBRC 100440)</name>
    <name type="common">Methanococcus jannaschii</name>
    <dbReference type="NCBI Taxonomy" id="243232"/>
    <lineage>
        <taxon>Archaea</taxon>
        <taxon>Methanobacteriati</taxon>
        <taxon>Methanobacteriota</taxon>
        <taxon>Methanomada group</taxon>
        <taxon>Methanococci</taxon>
        <taxon>Methanococcales</taxon>
        <taxon>Methanocaldococcaceae</taxon>
        <taxon>Methanocaldococcus</taxon>
    </lineage>
</organism>
<name>NOP10_METJA</name>
<reference key="1">
    <citation type="journal article" date="1996" name="Science">
        <title>Complete genome sequence of the methanogenic archaeon, Methanococcus jannaschii.</title>
        <authorList>
            <person name="Bult C.J."/>
            <person name="White O."/>
            <person name="Olsen G.J."/>
            <person name="Zhou L."/>
            <person name="Fleischmann R.D."/>
            <person name="Sutton G.G."/>
            <person name="Blake J.A."/>
            <person name="FitzGerald L.M."/>
            <person name="Clayton R.A."/>
            <person name="Gocayne J.D."/>
            <person name="Kerlavage A.R."/>
            <person name="Dougherty B.A."/>
            <person name="Tomb J.-F."/>
            <person name="Adams M.D."/>
            <person name="Reich C.I."/>
            <person name="Overbeek R."/>
            <person name="Kirkness E.F."/>
            <person name="Weinstock K.G."/>
            <person name="Merrick J.M."/>
            <person name="Glodek A."/>
            <person name="Scott J.L."/>
            <person name="Geoghagen N.S.M."/>
            <person name="Weidman J.F."/>
            <person name="Fuhrmann J.L."/>
            <person name="Nguyen D."/>
            <person name="Utterback T.R."/>
            <person name="Kelley J.M."/>
            <person name="Peterson J.D."/>
            <person name="Sadow P.W."/>
            <person name="Hanna M.C."/>
            <person name="Cotton M.D."/>
            <person name="Roberts K.M."/>
            <person name="Hurst M.A."/>
            <person name="Kaine B.P."/>
            <person name="Borodovsky M."/>
            <person name="Klenk H.-P."/>
            <person name="Fraser C.M."/>
            <person name="Smith H.O."/>
            <person name="Woese C.R."/>
            <person name="Venter J.C."/>
        </authorList>
    </citation>
    <scope>NUCLEOTIDE SEQUENCE [LARGE SCALE GENOMIC DNA]</scope>
    <source>
        <strain>ATCC 43067 / DSM 2661 / JAL-1 / JCM 10045 / NBRC 100440</strain>
    </source>
</reference>
<sequence length="60" mass="7130">MVEMRMKKCPKCGLYTLKEICPKCGEKTVIPKPPKFSLEDRWGKYRRMLKRALKNKNKAE</sequence>
<accession>P81303</accession>
<comment type="function">
    <text evidence="1">Involved in ribosome biogenesis; more specifically in 18S rRNA pseudouridylation and in cleavage of pre-rRNA.</text>
</comment>
<comment type="interaction">
    <interactant intactId="EBI-9026465">
        <id>P81303</id>
    </interactant>
    <interactant intactId="EBI-9026474">
        <id>Q57612</id>
        <label>truB</label>
    </interactant>
    <organismsDiffer>false</organismsDiffer>
    <experiments>5</experiments>
</comment>
<comment type="similarity">
    <text evidence="2">Belongs to the NOP10 family.</text>
</comment>
<protein>
    <recommendedName>
        <fullName>Ribosome biogenesis protein Nop10</fullName>
    </recommendedName>
</protein>
<keyword id="KW-0002">3D-structure</keyword>
<keyword id="KW-1185">Reference proteome</keyword>
<keyword id="KW-0687">Ribonucleoprotein</keyword>
<keyword id="KW-0690">Ribosome biogenesis</keyword>
<keyword id="KW-0698">rRNA processing</keyword>
<proteinExistence type="evidence at protein level"/>
<gene>
    <name type="primary">nop10</name>
    <name type="ordered locus">MJ0116.1</name>
</gene>
<evidence type="ECO:0000250" key="1"/>
<evidence type="ECO:0000305" key="2"/>
<evidence type="ECO:0007829" key="3">
    <source>
        <dbReference type="PDB" id="2APO"/>
    </source>
</evidence>
<feature type="chain" id="PRO_0000149018" description="Ribosome biogenesis protein Nop10">
    <location>
        <begin position="1"/>
        <end position="60"/>
    </location>
</feature>
<feature type="turn" evidence="3">
    <location>
        <begin position="10"/>
        <end position="12"/>
    </location>
</feature>
<feature type="strand" evidence="3">
    <location>
        <begin position="15"/>
        <end position="20"/>
    </location>
</feature>
<feature type="strand" evidence="3">
    <location>
        <begin position="22"/>
        <end position="24"/>
    </location>
</feature>
<feature type="helix" evidence="3">
    <location>
        <begin position="43"/>
        <end position="54"/>
    </location>
</feature>
<dbReference type="EMBL" id="L77117">
    <property type="protein sequence ID" value="AAB98109.1"/>
    <property type="molecule type" value="Genomic_DNA"/>
</dbReference>
<dbReference type="PDB" id="2APO">
    <property type="method" value="X-ray"/>
    <property type="resolution" value="1.95 A"/>
    <property type="chains" value="B=1-60"/>
</dbReference>
<dbReference type="PDB" id="2AQC">
    <property type="method" value="NMR"/>
    <property type="chains" value="A=1-60"/>
</dbReference>
<dbReference type="PDBsum" id="2APO"/>
<dbReference type="PDBsum" id="2AQC"/>
<dbReference type="BMRB" id="P81303"/>
<dbReference type="SMR" id="P81303"/>
<dbReference type="DIP" id="DIP-60500N"/>
<dbReference type="FunCoup" id="P81303">
    <property type="interactions" value="9"/>
</dbReference>
<dbReference type="IntAct" id="P81303">
    <property type="interactions" value="1"/>
</dbReference>
<dbReference type="STRING" id="243232.MJ_0116.1"/>
<dbReference type="PaxDb" id="243232-MJ_0116.1"/>
<dbReference type="EnsemblBacteria" id="AAB98109">
    <property type="protein sequence ID" value="AAB98109"/>
    <property type="gene ID" value="MJ_0116.1"/>
</dbReference>
<dbReference type="KEGG" id="mja:MJ_0116.1"/>
<dbReference type="eggNOG" id="arCOG00906">
    <property type="taxonomic scope" value="Archaea"/>
</dbReference>
<dbReference type="HOGENOM" id="CLU_196480_1_0_2"/>
<dbReference type="InParanoid" id="P81303"/>
<dbReference type="PhylomeDB" id="P81303"/>
<dbReference type="EvolutionaryTrace" id="P81303"/>
<dbReference type="Proteomes" id="UP000000805">
    <property type="component" value="Chromosome"/>
</dbReference>
<dbReference type="GO" id="GO:1990904">
    <property type="term" value="C:ribonucleoprotein complex"/>
    <property type="evidence" value="ECO:0007669"/>
    <property type="project" value="UniProtKB-KW"/>
</dbReference>
<dbReference type="GO" id="GO:0030515">
    <property type="term" value="F:snoRNA binding"/>
    <property type="evidence" value="ECO:0007669"/>
    <property type="project" value="InterPro"/>
</dbReference>
<dbReference type="GO" id="GO:0001522">
    <property type="term" value="P:pseudouridine synthesis"/>
    <property type="evidence" value="ECO:0007669"/>
    <property type="project" value="InterPro"/>
</dbReference>
<dbReference type="GO" id="GO:0006364">
    <property type="term" value="P:rRNA processing"/>
    <property type="evidence" value="ECO:0007669"/>
    <property type="project" value="UniProtKB-UniRule"/>
</dbReference>
<dbReference type="Gene3D" id="2.20.28.40">
    <property type="entry name" value="H/ACA ribonucleoprotein complex, subunit Nop10"/>
    <property type="match status" value="1"/>
</dbReference>
<dbReference type="HAMAP" id="MF_00803">
    <property type="entry name" value="Nop10"/>
    <property type="match status" value="1"/>
</dbReference>
<dbReference type="InterPro" id="IPR007264">
    <property type="entry name" value="H/ACA_rnp_Nop10"/>
</dbReference>
<dbReference type="InterPro" id="IPR036756">
    <property type="entry name" value="H/ACA_rnp_Nop10_sf"/>
</dbReference>
<dbReference type="InterPro" id="IPR023532">
    <property type="entry name" value="Nop10_arc-typ"/>
</dbReference>
<dbReference type="NCBIfam" id="NF009623">
    <property type="entry name" value="PRK13130.1"/>
    <property type="match status" value="1"/>
</dbReference>
<dbReference type="Pfam" id="PF04135">
    <property type="entry name" value="Nop10p"/>
    <property type="match status" value="1"/>
</dbReference>
<dbReference type="SUPFAM" id="SSF144210">
    <property type="entry name" value="Nop10-like SnoRNP"/>
    <property type="match status" value="1"/>
</dbReference>